<dbReference type="EMBL" id="M20255">
    <property type="protein sequence ID" value="AAA82520.1"/>
    <property type="molecule type" value="Genomic_DNA"/>
</dbReference>
<dbReference type="EMBL" id="CP001983">
    <property type="protein sequence ID" value="ADE72132.1"/>
    <property type="molecule type" value="Genomic_DNA"/>
</dbReference>
<dbReference type="PIR" id="B31482">
    <property type="entry name" value="B31482"/>
</dbReference>
<dbReference type="RefSeq" id="WP_013059805.1">
    <property type="nucleotide sequence ID" value="NC_014019.1"/>
</dbReference>
<dbReference type="SMR" id="P20600"/>
<dbReference type="STRING" id="545693.BMQ_5154"/>
<dbReference type="GeneID" id="93645614"/>
<dbReference type="KEGG" id="bmq:BMQ_5154"/>
<dbReference type="eggNOG" id="COG0356">
    <property type="taxonomic scope" value="Bacteria"/>
</dbReference>
<dbReference type="HOGENOM" id="CLU_041018_2_3_9"/>
<dbReference type="Proteomes" id="UP000000935">
    <property type="component" value="Chromosome"/>
</dbReference>
<dbReference type="GO" id="GO:0005886">
    <property type="term" value="C:plasma membrane"/>
    <property type="evidence" value="ECO:0007669"/>
    <property type="project" value="UniProtKB-SubCell"/>
</dbReference>
<dbReference type="GO" id="GO:0045259">
    <property type="term" value="C:proton-transporting ATP synthase complex"/>
    <property type="evidence" value="ECO:0007669"/>
    <property type="project" value="UniProtKB-KW"/>
</dbReference>
<dbReference type="GO" id="GO:0046933">
    <property type="term" value="F:proton-transporting ATP synthase activity, rotational mechanism"/>
    <property type="evidence" value="ECO:0007669"/>
    <property type="project" value="UniProtKB-UniRule"/>
</dbReference>
<dbReference type="GO" id="GO:0042777">
    <property type="term" value="P:proton motive force-driven plasma membrane ATP synthesis"/>
    <property type="evidence" value="ECO:0007669"/>
    <property type="project" value="TreeGrafter"/>
</dbReference>
<dbReference type="CDD" id="cd00310">
    <property type="entry name" value="ATP-synt_Fo_a_6"/>
    <property type="match status" value="1"/>
</dbReference>
<dbReference type="FunFam" id="1.20.120.220:FF:000005">
    <property type="entry name" value="ATP synthase subunit a"/>
    <property type="match status" value="1"/>
</dbReference>
<dbReference type="Gene3D" id="1.20.120.220">
    <property type="entry name" value="ATP synthase, F0 complex, subunit A"/>
    <property type="match status" value="1"/>
</dbReference>
<dbReference type="HAMAP" id="MF_01393">
    <property type="entry name" value="ATP_synth_a_bact"/>
    <property type="match status" value="1"/>
</dbReference>
<dbReference type="InterPro" id="IPR045082">
    <property type="entry name" value="ATP_syn_F0_a_bact/chloroplast"/>
</dbReference>
<dbReference type="InterPro" id="IPR000568">
    <property type="entry name" value="ATP_synth_F0_asu"/>
</dbReference>
<dbReference type="InterPro" id="IPR023011">
    <property type="entry name" value="ATP_synth_F0_asu_AS"/>
</dbReference>
<dbReference type="InterPro" id="IPR035908">
    <property type="entry name" value="F0_ATP_A_sf"/>
</dbReference>
<dbReference type="NCBIfam" id="TIGR01131">
    <property type="entry name" value="ATP_synt_6_or_A"/>
    <property type="match status" value="1"/>
</dbReference>
<dbReference type="NCBIfam" id="NF004479">
    <property type="entry name" value="PRK05815.1-4"/>
    <property type="match status" value="1"/>
</dbReference>
<dbReference type="PANTHER" id="PTHR42823">
    <property type="entry name" value="ATP SYNTHASE SUBUNIT A, CHLOROPLASTIC"/>
    <property type="match status" value="1"/>
</dbReference>
<dbReference type="PANTHER" id="PTHR42823:SF3">
    <property type="entry name" value="ATP SYNTHASE SUBUNIT A, CHLOROPLASTIC"/>
    <property type="match status" value="1"/>
</dbReference>
<dbReference type="Pfam" id="PF00119">
    <property type="entry name" value="ATP-synt_A"/>
    <property type="match status" value="1"/>
</dbReference>
<dbReference type="PRINTS" id="PR00123">
    <property type="entry name" value="ATPASEA"/>
</dbReference>
<dbReference type="SUPFAM" id="SSF81336">
    <property type="entry name" value="F1F0 ATP synthase subunit A"/>
    <property type="match status" value="1"/>
</dbReference>
<dbReference type="PROSITE" id="PS00449">
    <property type="entry name" value="ATPASE_A"/>
    <property type="match status" value="1"/>
</dbReference>
<feature type="chain" id="PRO_0000082045" description="ATP synthase subunit a">
    <location>
        <begin position="1"/>
        <end position="236"/>
    </location>
</feature>
<feature type="transmembrane region" description="Helical" evidence="1">
    <location>
        <begin position="18"/>
        <end position="38"/>
    </location>
</feature>
<feature type="transmembrane region" description="Helical" evidence="1">
    <location>
        <begin position="80"/>
        <end position="100"/>
    </location>
</feature>
<feature type="transmembrane region" description="Helical" evidence="1">
    <location>
        <begin position="112"/>
        <end position="132"/>
    </location>
</feature>
<feature type="transmembrane region" description="Helical" evidence="1">
    <location>
        <begin position="179"/>
        <end position="199"/>
    </location>
</feature>
<feature type="transmembrane region" description="Helical" evidence="1">
    <location>
        <begin position="200"/>
        <end position="220"/>
    </location>
</feature>
<organism>
    <name type="scientific">Priestia megaterium (strain ATCC 12872 / QMB1551)</name>
    <name type="common">Bacillus megaterium</name>
    <dbReference type="NCBI Taxonomy" id="545693"/>
    <lineage>
        <taxon>Bacteria</taxon>
        <taxon>Bacillati</taxon>
        <taxon>Bacillota</taxon>
        <taxon>Bacilli</taxon>
        <taxon>Bacillales</taxon>
        <taxon>Bacillaceae</taxon>
        <taxon>Priestia</taxon>
    </lineage>
</organism>
<evidence type="ECO:0000255" key="1">
    <source>
        <dbReference type="HAMAP-Rule" id="MF_01393"/>
    </source>
</evidence>
<protein>
    <recommendedName>
        <fullName evidence="1">ATP synthase subunit a</fullName>
    </recommendedName>
    <alternativeName>
        <fullName evidence="1">ATP synthase F0 sector subunit a</fullName>
    </alternativeName>
    <alternativeName>
        <fullName evidence="1">F-ATPase subunit 6</fullName>
    </alternativeName>
</protein>
<keyword id="KW-0066">ATP synthesis</keyword>
<keyword id="KW-1003">Cell membrane</keyword>
<keyword id="KW-0138">CF(0)</keyword>
<keyword id="KW-0375">Hydrogen ion transport</keyword>
<keyword id="KW-0406">Ion transport</keyword>
<keyword id="KW-0472">Membrane</keyword>
<keyword id="KW-1185">Reference proteome</keyword>
<keyword id="KW-0812">Transmembrane</keyword>
<keyword id="KW-1133">Transmembrane helix</keyword>
<keyword id="KW-0813">Transport</keyword>
<sequence length="236" mass="26085">MGHESPTIEFLGLTFSQSNLLMVTVASVIVFLIAVLCTRTLAMKPSGAQNFIEWVLDFVKGLVNSNMDWKTGGRFLTLGVTLLMYIFVSNMLGLPFAIVIDHNLWWKSPTADPAITLTLAVMVVVLSHYYGIKMRGFSAYTKDYFKPMAFLFPLKIIEEFANTLTLGLRLYGNIYAGEILLSLLAGLATTGFLGTIGAAIPMLLWQGFSIFVGAIQAFIFTMLTMVYLSHKVSSDH</sequence>
<comment type="function">
    <text evidence="1">Key component of the proton channel; it plays a direct role in the translocation of protons across the membrane.</text>
</comment>
<comment type="subunit">
    <text evidence="1">F-type ATPases have 2 components, CF(1) - the catalytic core - and CF(0) - the membrane proton channel. CF(1) has five subunits: alpha(3), beta(3), gamma(1), delta(1), epsilon(1). CF(0) has three main subunits: a(1), b(2) and c(9-12). The alpha and beta chains form an alternating ring which encloses part of the gamma chain. CF(1) is attached to CF(0) by a central stalk formed by the gamma and epsilon chains, while a peripheral stalk is formed by the delta and b chains.</text>
</comment>
<comment type="subcellular location">
    <subcellularLocation>
        <location evidence="1">Cell membrane</location>
        <topology evidence="1">Multi-pass membrane protein</topology>
    </subcellularLocation>
</comment>
<comment type="similarity">
    <text evidence="1">Belongs to the ATPase A chain family.</text>
</comment>
<gene>
    <name evidence="1" type="primary">atpB</name>
    <name type="ordered locus">BMQ_5154</name>
</gene>
<accession>P20600</accession>
<accession>D5DWG7</accession>
<name>ATP6_PRIM1</name>
<proteinExistence type="inferred from homology"/>
<reference key="1">
    <citation type="journal article" date="1989" name="J. Biol. Chem.">
        <title>Organization and sequence of the genes coding for the proton-translocating ATPase of Bacillus megaterium.</title>
        <authorList>
            <person name="Brusilow W.S.A."/>
            <person name="Scarpetta M.A."/>
            <person name="Hawthorne C.A."/>
            <person name="Clark W.P."/>
        </authorList>
    </citation>
    <scope>NUCLEOTIDE SEQUENCE [GENOMIC DNA]</scope>
</reference>
<reference key="2">
    <citation type="journal article" date="2011" name="J. Bacteriol.">
        <title>Genome sequences of the biotechnologically important Bacillus megaterium strains QM B1551 and DSM319.</title>
        <authorList>
            <person name="Eppinger M."/>
            <person name="Bunk B."/>
            <person name="Johns M.A."/>
            <person name="Edirisinghe J.N."/>
            <person name="Kutumbaka K.K."/>
            <person name="Koenig S.S."/>
            <person name="Creasy H.H."/>
            <person name="Rosovitz M.J."/>
            <person name="Riley D.R."/>
            <person name="Daugherty S."/>
            <person name="Martin M."/>
            <person name="Elbourne L.D."/>
            <person name="Paulsen I."/>
            <person name="Biedendieck R."/>
            <person name="Braun C."/>
            <person name="Grayburn S."/>
            <person name="Dhingra S."/>
            <person name="Lukyanchuk V."/>
            <person name="Ball B."/>
            <person name="Ul-Qamar R."/>
            <person name="Seibel J."/>
            <person name="Bremer E."/>
            <person name="Jahn D."/>
            <person name="Ravel J."/>
            <person name="Vary P.S."/>
        </authorList>
    </citation>
    <scope>NUCLEOTIDE SEQUENCE [LARGE SCALE GENOMIC DNA]</scope>
    <source>
        <strain>ATCC 12872 / DSM 1804 / QMB1551</strain>
    </source>
</reference>